<reference key="1">
    <citation type="journal article" date="1992" name="J. Biol. Chem.">
        <title>Alterations in mRNA translation as a mechanism for the modification of enzyme synthesis during evolution. The ornithine decarboxylase model.</title>
        <authorList>
            <person name="Johannes G."/>
            <person name="Berger F.G."/>
        </authorList>
    </citation>
    <scope>NUCLEOTIDE SEQUENCE [MRNA]</scope>
</reference>
<proteinExistence type="evidence at transcript level"/>
<organism>
    <name type="scientific">Mus pahari</name>
    <name type="common">Gairdner's shrew-mouse</name>
    <name type="synonym">Coelomys pahari</name>
    <dbReference type="NCBI Taxonomy" id="10093"/>
    <lineage>
        <taxon>Eukaryota</taxon>
        <taxon>Metazoa</taxon>
        <taxon>Chordata</taxon>
        <taxon>Craniata</taxon>
        <taxon>Vertebrata</taxon>
        <taxon>Euteleostomi</taxon>
        <taxon>Mammalia</taxon>
        <taxon>Eutheria</taxon>
        <taxon>Euarchontoglires</taxon>
        <taxon>Glires</taxon>
        <taxon>Rodentia</taxon>
        <taxon>Myomorpha</taxon>
        <taxon>Muroidea</taxon>
        <taxon>Muridae</taxon>
        <taxon>Murinae</taxon>
        <taxon>Mus</taxon>
        <taxon>Coelomys</taxon>
    </lineage>
</organism>
<evidence type="ECO:0000250" key="1">
    <source>
        <dbReference type="UniProtKB" id="P00860"/>
    </source>
</evidence>
<evidence type="ECO:0000250" key="2">
    <source>
        <dbReference type="UniProtKB" id="P07805"/>
    </source>
</evidence>
<evidence type="ECO:0000250" key="3">
    <source>
        <dbReference type="UniProtKB" id="P11926"/>
    </source>
</evidence>
<evidence type="ECO:0000305" key="4"/>
<name>DCOR_MUSPA</name>
<sequence length="461" mass="51203">MSSFTKEEFDCHILDEGFTAKDILDQKINEVSSSDDKDAFYVADLGDILKKHLRWLKALPRVTPFYAVKCNDSRAIVSTLAATGTGFDCASKTEIQLVQGLGVPPERIIYANPCKQVSQIKYAASSGVQMMTFDSEIELMKVARAHPKAKLVLRIATDDSKAVCRLSVKFGATLKTSRLLLERAKELNIDVIGVSFHVGSGCTDPETFVQAVSDARCVFDMGTEVGFSMYLLDIGGGFPGSEDTKLKFEEITSVINPALDKYFPSDSGVRIIAEPGRYYVASAFTLAVNIIAKKTVWKEQPGSDDEDESNEQTFMYYVNDGVYGSFNCILYDHAHVKALLQKRPKPDEKYYSSSIWGPTCDGLDRIVERCNLPEMHVGDWMLFENMGAYTVAAASTFNGFQRPNIYYVMSRPMWQLMKRIQSHGFPPEVEEQDDGTLPMSCAQESGMDHHSAACASARINV</sequence>
<protein>
    <recommendedName>
        <fullName>Ornithine decarboxylase</fullName>
        <shortName>ODC</shortName>
        <ecNumber>4.1.1.17</ecNumber>
    </recommendedName>
</protein>
<gene>
    <name type="primary">Odc1</name>
    <name type="synonym">Odc</name>
</gene>
<accession>P27119</accession>
<keyword id="KW-0210">Decarboxylase</keyword>
<keyword id="KW-0456">Lyase</keyword>
<keyword id="KW-0597">Phosphoprotein</keyword>
<keyword id="KW-0620">Polyamine biosynthesis</keyword>
<keyword id="KW-0663">Pyridoxal phosphate</keyword>
<keyword id="KW-0702">S-nitrosylation</keyword>
<dbReference type="EC" id="4.1.1.17"/>
<dbReference type="EMBL" id="M87223">
    <property type="protein sequence ID" value="AAA39847.1"/>
    <property type="molecule type" value="mRNA"/>
</dbReference>
<dbReference type="PIR" id="I55356">
    <property type="entry name" value="I55356"/>
</dbReference>
<dbReference type="SMR" id="P27119"/>
<dbReference type="MGI" id="MGI:97402">
    <property type="gene designation" value="Odc1"/>
</dbReference>
<dbReference type="UniPathway" id="UPA00535">
    <property type="reaction ID" value="UER00288"/>
</dbReference>
<dbReference type="GO" id="GO:0005737">
    <property type="term" value="C:cytoplasm"/>
    <property type="evidence" value="ECO:0000250"/>
    <property type="project" value="UniProtKB"/>
</dbReference>
<dbReference type="GO" id="GO:0004586">
    <property type="term" value="F:ornithine decarboxylase activity"/>
    <property type="evidence" value="ECO:0000250"/>
    <property type="project" value="UniProtKB"/>
</dbReference>
<dbReference type="GO" id="GO:0042803">
    <property type="term" value="F:protein homodimerization activity"/>
    <property type="evidence" value="ECO:0000250"/>
    <property type="project" value="UniProtKB"/>
</dbReference>
<dbReference type="GO" id="GO:0033387">
    <property type="term" value="P:putrescine biosynthetic process from arginine, via ornithine"/>
    <property type="evidence" value="ECO:0000250"/>
    <property type="project" value="UniProtKB"/>
</dbReference>
<dbReference type="GO" id="GO:0042176">
    <property type="term" value="P:regulation of protein catabolic process"/>
    <property type="evidence" value="ECO:0000250"/>
    <property type="project" value="UniProtKB"/>
</dbReference>
<dbReference type="CDD" id="cd00622">
    <property type="entry name" value="PLPDE_III_ODC"/>
    <property type="match status" value="1"/>
</dbReference>
<dbReference type="FunFam" id="2.40.37.10:FF:000005">
    <property type="entry name" value="Ornithine decarboxylase"/>
    <property type="match status" value="1"/>
</dbReference>
<dbReference type="FunFam" id="3.20.20.10:FF:000006">
    <property type="entry name" value="Ornithine decarboxylase 1"/>
    <property type="match status" value="1"/>
</dbReference>
<dbReference type="Gene3D" id="3.20.20.10">
    <property type="entry name" value="Alanine racemase"/>
    <property type="match status" value="1"/>
</dbReference>
<dbReference type="Gene3D" id="2.40.37.10">
    <property type="entry name" value="Lyase, Ornithine Decarboxylase, Chain A, domain 1"/>
    <property type="match status" value="1"/>
</dbReference>
<dbReference type="InterPro" id="IPR009006">
    <property type="entry name" value="Ala_racemase/Decarboxylase_C"/>
</dbReference>
<dbReference type="InterPro" id="IPR022643">
    <property type="entry name" value="De-COase2_C"/>
</dbReference>
<dbReference type="InterPro" id="IPR022657">
    <property type="entry name" value="De-COase2_CS"/>
</dbReference>
<dbReference type="InterPro" id="IPR022644">
    <property type="entry name" value="De-COase2_N"/>
</dbReference>
<dbReference type="InterPro" id="IPR022653">
    <property type="entry name" value="De-COase2_pyr-phos_BS"/>
</dbReference>
<dbReference type="InterPro" id="IPR000183">
    <property type="entry name" value="Orn/DAP/Arg_de-COase"/>
</dbReference>
<dbReference type="InterPro" id="IPR002433">
    <property type="entry name" value="Orn_de-COase"/>
</dbReference>
<dbReference type="InterPro" id="IPR029066">
    <property type="entry name" value="PLP-binding_barrel"/>
</dbReference>
<dbReference type="PANTHER" id="PTHR11482">
    <property type="entry name" value="ARGININE/DIAMINOPIMELATE/ORNITHINE DECARBOXYLASE"/>
    <property type="match status" value="1"/>
</dbReference>
<dbReference type="PANTHER" id="PTHR11482:SF42">
    <property type="entry name" value="ORNITHINE DECARBOXYLASE"/>
    <property type="match status" value="1"/>
</dbReference>
<dbReference type="Pfam" id="PF02784">
    <property type="entry name" value="Orn_Arg_deC_N"/>
    <property type="match status" value="1"/>
</dbReference>
<dbReference type="Pfam" id="PF00278">
    <property type="entry name" value="Orn_DAP_Arg_deC"/>
    <property type="match status" value="1"/>
</dbReference>
<dbReference type="PRINTS" id="PR01179">
    <property type="entry name" value="ODADCRBXLASE"/>
</dbReference>
<dbReference type="PRINTS" id="PR01182">
    <property type="entry name" value="ORNDCRBXLASE"/>
</dbReference>
<dbReference type="SUPFAM" id="SSF50621">
    <property type="entry name" value="Alanine racemase C-terminal domain-like"/>
    <property type="match status" value="1"/>
</dbReference>
<dbReference type="SUPFAM" id="SSF51419">
    <property type="entry name" value="PLP-binding barrel"/>
    <property type="match status" value="1"/>
</dbReference>
<dbReference type="PROSITE" id="PS00878">
    <property type="entry name" value="ODR_DC_2_1"/>
    <property type="match status" value="1"/>
</dbReference>
<dbReference type="PROSITE" id="PS00879">
    <property type="entry name" value="ODR_DC_2_2"/>
    <property type="match status" value="1"/>
</dbReference>
<comment type="function">
    <text evidence="3">Catalyzes the first and rate-limiting step of polyamine biosynthesis that converts ornithine into putrescine, which is the precursor for the polyamines, spermidine and spermine. Polyamines are essential for cell proliferation and are implicated in cellular processes, ranging from DNA replication to apoptosis.</text>
</comment>
<comment type="catalytic activity">
    <reaction evidence="3">
        <text>L-ornithine + H(+) = putrescine + CO2</text>
        <dbReference type="Rhea" id="RHEA:22964"/>
        <dbReference type="ChEBI" id="CHEBI:15378"/>
        <dbReference type="ChEBI" id="CHEBI:16526"/>
        <dbReference type="ChEBI" id="CHEBI:46911"/>
        <dbReference type="ChEBI" id="CHEBI:326268"/>
        <dbReference type="EC" id="4.1.1.17"/>
    </reaction>
</comment>
<comment type="cofactor">
    <cofactor evidence="3">
        <name>pyridoxal 5'-phosphate</name>
        <dbReference type="ChEBI" id="CHEBI:597326"/>
    </cofactor>
</comment>
<comment type="activity regulation">
    <text evidence="3">Inhibited by antizymes (AZs) OAZ1, OAZ2 and OAZ3 in response to polyamine levels. AZs inhibit the assembly of the functional homodimer by binding to ODC monomers. Additionally, OAZ1 targets ODC monomers for ubiquitin-independent proteolytic destruction by the 26S proteasome.</text>
</comment>
<comment type="pathway">
    <text>Amine and polyamine biosynthesis; putrescine biosynthesis via L-ornithine pathway; putrescine from L-ornithine: step 1/1.</text>
</comment>
<comment type="subunit">
    <text evidence="1">Homodimer. Only the dimer is catalytically active, as the active sites are constructed of residues from both monomers.</text>
</comment>
<comment type="similarity">
    <text evidence="4">Belongs to the Orn/Lys/Arg decarboxylase class-II family.</text>
</comment>
<feature type="chain" id="PRO_0000149893" description="Ornithine decarboxylase">
    <location>
        <begin position="1"/>
        <end position="461"/>
    </location>
</feature>
<feature type="active site" description="Proton donor; shared with dimeric partner" evidence="3">
    <location>
        <position position="360"/>
    </location>
</feature>
<feature type="binding site" evidence="3">
    <location>
        <position position="200"/>
    </location>
    <ligand>
        <name>pyridoxal 5'-phosphate</name>
        <dbReference type="ChEBI" id="CHEBI:597326"/>
    </ligand>
</feature>
<feature type="binding site" evidence="3">
    <location>
        <position position="237"/>
    </location>
    <ligand>
        <name>pyridoxal 5'-phosphate</name>
        <dbReference type="ChEBI" id="CHEBI:597326"/>
    </ligand>
</feature>
<feature type="binding site" evidence="3">
    <location>
        <begin position="274"/>
        <end position="277"/>
    </location>
    <ligand>
        <name>pyridoxal 5'-phosphate</name>
        <dbReference type="ChEBI" id="CHEBI:597326"/>
    </ligand>
</feature>
<feature type="binding site" description="in other chain" evidence="2">
    <location>
        <begin position="331"/>
        <end position="332"/>
    </location>
    <ligand>
        <name>substrate</name>
        <note>ligand shared between dimeric partners</note>
    </ligand>
</feature>
<feature type="binding site" evidence="2">
    <location>
        <position position="361"/>
    </location>
    <ligand>
        <name>substrate</name>
        <note>ligand shared between dimeric partners</note>
    </ligand>
</feature>
<feature type="binding site" evidence="3">
    <location>
        <position position="389"/>
    </location>
    <ligand>
        <name>pyridoxal 5'-phosphate</name>
        <dbReference type="ChEBI" id="CHEBI:597326"/>
    </ligand>
</feature>
<feature type="site" description="Stacks against the aromatic ring of pyridoxal phosphate and stabilizes reaction intermediates" evidence="1">
    <location>
        <position position="197"/>
    </location>
</feature>
<feature type="modified residue" description="N6-(pyridoxal phosphate)lysine" evidence="3">
    <location>
        <position position="69"/>
    </location>
</feature>
<feature type="modified residue" description="Phosphoserine; by CK2" evidence="1">
    <location>
        <position position="303"/>
    </location>
</feature>
<feature type="modified residue" description="S-nitrosocysteine" evidence="3">
    <location>
        <position position="360"/>
    </location>
</feature>